<keyword id="KW-0007">Acetylation</keyword>
<keyword id="KW-0067">ATP-binding</keyword>
<keyword id="KW-0963">Cytoplasm</keyword>
<keyword id="KW-0418">Kinase</keyword>
<keyword id="KW-0545">Nucleotide biosynthesis</keyword>
<keyword id="KW-0547">Nucleotide-binding</keyword>
<keyword id="KW-0808">Transferase</keyword>
<name>KAD_SHIF8</name>
<accession>Q0T7B1</accession>
<sequence>MRIILLGAPGAGKGTQAQFIMEKYGIPQISTGDMLRAAVKSGSELGKQAKDIMDAGKLVTDELVIALVKERIAQEDCRNGFLLDGFPRTIPQADAMKEAGINVDYVLEFDVPDELIVDRIVGRRVHAPSGRVYHVKFNPPKVEGKDDVTGEELTTRKDDQEETVRKRLVEYHQMTAPLIGYYSKEAEAGNTKYAKVDGTKPVAEVRADLEKILG</sequence>
<gene>
    <name evidence="2" type="primary">adk</name>
    <name type="ordered locus">SFV_0447</name>
</gene>
<feature type="chain" id="PRO_1000058906" description="Adenylate kinase">
    <location>
        <begin position="1"/>
        <end position="214"/>
    </location>
</feature>
<feature type="region of interest" description="NMP" evidence="2">
    <location>
        <begin position="30"/>
        <end position="59"/>
    </location>
</feature>
<feature type="region of interest" description="LID">
    <location>
        <begin position="122"/>
        <end position="159"/>
    </location>
</feature>
<feature type="binding site" evidence="2">
    <location>
        <begin position="10"/>
        <end position="15"/>
    </location>
    <ligand>
        <name>ATP</name>
        <dbReference type="ChEBI" id="CHEBI:30616"/>
    </ligand>
</feature>
<feature type="binding site" evidence="2">
    <location>
        <position position="31"/>
    </location>
    <ligand>
        <name>AMP</name>
        <dbReference type="ChEBI" id="CHEBI:456215"/>
    </ligand>
</feature>
<feature type="binding site" evidence="2">
    <location>
        <position position="36"/>
    </location>
    <ligand>
        <name>AMP</name>
        <dbReference type="ChEBI" id="CHEBI:456215"/>
    </ligand>
</feature>
<feature type="binding site" evidence="2">
    <location>
        <begin position="57"/>
        <end position="59"/>
    </location>
    <ligand>
        <name>AMP</name>
        <dbReference type="ChEBI" id="CHEBI:456215"/>
    </ligand>
</feature>
<feature type="binding site" evidence="2">
    <location>
        <begin position="85"/>
        <end position="88"/>
    </location>
    <ligand>
        <name>AMP</name>
        <dbReference type="ChEBI" id="CHEBI:456215"/>
    </ligand>
</feature>
<feature type="binding site" evidence="2">
    <location>
        <position position="92"/>
    </location>
    <ligand>
        <name>AMP</name>
        <dbReference type="ChEBI" id="CHEBI:456215"/>
    </ligand>
</feature>
<feature type="binding site" evidence="2">
    <location>
        <position position="123"/>
    </location>
    <ligand>
        <name>ATP</name>
        <dbReference type="ChEBI" id="CHEBI:30616"/>
    </ligand>
</feature>
<feature type="binding site" evidence="2">
    <location>
        <begin position="132"/>
        <end position="133"/>
    </location>
    <ligand>
        <name>ATP</name>
        <dbReference type="ChEBI" id="CHEBI:30616"/>
    </ligand>
</feature>
<feature type="binding site" evidence="2">
    <location>
        <position position="156"/>
    </location>
    <ligand>
        <name>AMP</name>
        <dbReference type="ChEBI" id="CHEBI:456215"/>
    </ligand>
</feature>
<feature type="binding site" evidence="2">
    <location>
        <position position="167"/>
    </location>
    <ligand>
        <name>AMP</name>
        <dbReference type="ChEBI" id="CHEBI:456215"/>
    </ligand>
</feature>
<feature type="binding site" evidence="2">
    <location>
        <position position="200"/>
    </location>
    <ligand>
        <name>ATP</name>
        <dbReference type="ChEBI" id="CHEBI:30616"/>
    </ligand>
</feature>
<feature type="modified residue" description="N6-acetyllysine" evidence="1">
    <location>
        <position position="192"/>
    </location>
</feature>
<comment type="function">
    <text evidence="2">Catalyzes the reversible transfer of the terminal phosphate group between ATP and AMP. Plays an important role in cellular energy homeostasis and in adenine nucleotide metabolism.</text>
</comment>
<comment type="catalytic activity">
    <reaction evidence="2">
        <text>AMP + ATP = 2 ADP</text>
        <dbReference type="Rhea" id="RHEA:12973"/>
        <dbReference type="ChEBI" id="CHEBI:30616"/>
        <dbReference type="ChEBI" id="CHEBI:456215"/>
        <dbReference type="ChEBI" id="CHEBI:456216"/>
        <dbReference type="EC" id="2.7.4.3"/>
    </reaction>
</comment>
<comment type="pathway">
    <text evidence="2">Purine metabolism; AMP biosynthesis via salvage pathway; AMP from ADP: step 1/1.</text>
</comment>
<comment type="subunit">
    <text evidence="2">Monomer.</text>
</comment>
<comment type="subcellular location">
    <subcellularLocation>
        <location evidence="2">Cytoplasm</location>
    </subcellularLocation>
</comment>
<comment type="domain">
    <text evidence="2">Consists of three domains, a large central CORE domain and two small peripheral domains, NMPbind and LID, which undergo movements during catalysis. The LID domain closes over the site of phosphoryl transfer upon ATP binding. Assembling and dissambling the active center during each catalytic cycle provides an effective means to prevent ATP hydrolysis.</text>
</comment>
<comment type="similarity">
    <text evidence="2">Belongs to the adenylate kinase family.</text>
</comment>
<dbReference type="EC" id="2.7.4.3" evidence="2"/>
<dbReference type="EMBL" id="CP000266">
    <property type="protein sequence ID" value="ABF02715.1"/>
    <property type="molecule type" value="Genomic_DNA"/>
</dbReference>
<dbReference type="RefSeq" id="WP_001220233.1">
    <property type="nucleotide sequence ID" value="NC_008258.1"/>
</dbReference>
<dbReference type="SMR" id="Q0T7B1"/>
<dbReference type="GeneID" id="75170492"/>
<dbReference type="KEGG" id="sfv:SFV_0447"/>
<dbReference type="HOGENOM" id="CLU_032354_1_2_6"/>
<dbReference type="UniPathway" id="UPA00588">
    <property type="reaction ID" value="UER00649"/>
</dbReference>
<dbReference type="Proteomes" id="UP000000659">
    <property type="component" value="Chromosome"/>
</dbReference>
<dbReference type="GO" id="GO:0005737">
    <property type="term" value="C:cytoplasm"/>
    <property type="evidence" value="ECO:0007669"/>
    <property type="project" value="UniProtKB-SubCell"/>
</dbReference>
<dbReference type="GO" id="GO:0004017">
    <property type="term" value="F:adenylate kinase activity"/>
    <property type="evidence" value="ECO:0007669"/>
    <property type="project" value="UniProtKB-UniRule"/>
</dbReference>
<dbReference type="GO" id="GO:0005524">
    <property type="term" value="F:ATP binding"/>
    <property type="evidence" value="ECO:0007669"/>
    <property type="project" value="UniProtKB-UniRule"/>
</dbReference>
<dbReference type="GO" id="GO:0044209">
    <property type="term" value="P:AMP salvage"/>
    <property type="evidence" value="ECO:0007669"/>
    <property type="project" value="UniProtKB-UniRule"/>
</dbReference>
<dbReference type="CDD" id="cd01428">
    <property type="entry name" value="ADK"/>
    <property type="match status" value="1"/>
</dbReference>
<dbReference type="FunFam" id="3.40.50.300:FF:000106">
    <property type="entry name" value="Adenylate kinase mitochondrial"/>
    <property type="match status" value="1"/>
</dbReference>
<dbReference type="Gene3D" id="3.40.50.300">
    <property type="entry name" value="P-loop containing nucleotide triphosphate hydrolases"/>
    <property type="match status" value="1"/>
</dbReference>
<dbReference type="HAMAP" id="MF_00235">
    <property type="entry name" value="Adenylate_kinase_Adk"/>
    <property type="match status" value="1"/>
</dbReference>
<dbReference type="InterPro" id="IPR006259">
    <property type="entry name" value="Adenyl_kin_sub"/>
</dbReference>
<dbReference type="InterPro" id="IPR000850">
    <property type="entry name" value="Adenylat/UMP-CMP_kin"/>
</dbReference>
<dbReference type="InterPro" id="IPR033690">
    <property type="entry name" value="Adenylat_kinase_CS"/>
</dbReference>
<dbReference type="InterPro" id="IPR007862">
    <property type="entry name" value="Adenylate_kinase_lid-dom"/>
</dbReference>
<dbReference type="InterPro" id="IPR027417">
    <property type="entry name" value="P-loop_NTPase"/>
</dbReference>
<dbReference type="NCBIfam" id="TIGR01351">
    <property type="entry name" value="adk"/>
    <property type="match status" value="1"/>
</dbReference>
<dbReference type="NCBIfam" id="NF001379">
    <property type="entry name" value="PRK00279.1-1"/>
    <property type="match status" value="1"/>
</dbReference>
<dbReference type="NCBIfam" id="NF001380">
    <property type="entry name" value="PRK00279.1-2"/>
    <property type="match status" value="1"/>
</dbReference>
<dbReference type="NCBIfam" id="NF001381">
    <property type="entry name" value="PRK00279.1-3"/>
    <property type="match status" value="1"/>
</dbReference>
<dbReference type="NCBIfam" id="NF011100">
    <property type="entry name" value="PRK14527.1"/>
    <property type="match status" value="1"/>
</dbReference>
<dbReference type="PANTHER" id="PTHR23359">
    <property type="entry name" value="NUCLEOTIDE KINASE"/>
    <property type="match status" value="1"/>
</dbReference>
<dbReference type="Pfam" id="PF00406">
    <property type="entry name" value="ADK"/>
    <property type="match status" value="1"/>
</dbReference>
<dbReference type="Pfam" id="PF05191">
    <property type="entry name" value="ADK_lid"/>
    <property type="match status" value="1"/>
</dbReference>
<dbReference type="PRINTS" id="PR00094">
    <property type="entry name" value="ADENYLTKNASE"/>
</dbReference>
<dbReference type="SUPFAM" id="SSF52540">
    <property type="entry name" value="P-loop containing nucleoside triphosphate hydrolases"/>
    <property type="match status" value="1"/>
</dbReference>
<dbReference type="PROSITE" id="PS00113">
    <property type="entry name" value="ADENYLATE_KINASE"/>
    <property type="match status" value="1"/>
</dbReference>
<organism>
    <name type="scientific">Shigella flexneri serotype 5b (strain 8401)</name>
    <dbReference type="NCBI Taxonomy" id="373384"/>
    <lineage>
        <taxon>Bacteria</taxon>
        <taxon>Pseudomonadati</taxon>
        <taxon>Pseudomonadota</taxon>
        <taxon>Gammaproteobacteria</taxon>
        <taxon>Enterobacterales</taxon>
        <taxon>Enterobacteriaceae</taxon>
        <taxon>Shigella</taxon>
    </lineage>
</organism>
<proteinExistence type="inferred from homology"/>
<reference key="1">
    <citation type="journal article" date="2006" name="BMC Genomics">
        <title>Complete genome sequence of Shigella flexneri 5b and comparison with Shigella flexneri 2a.</title>
        <authorList>
            <person name="Nie H."/>
            <person name="Yang F."/>
            <person name="Zhang X."/>
            <person name="Yang J."/>
            <person name="Chen L."/>
            <person name="Wang J."/>
            <person name="Xiong Z."/>
            <person name="Peng J."/>
            <person name="Sun L."/>
            <person name="Dong J."/>
            <person name="Xue Y."/>
            <person name="Xu X."/>
            <person name="Chen S."/>
            <person name="Yao Z."/>
            <person name="Shen Y."/>
            <person name="Jin Q."/>
        </authorList>
    </citation>
    <scope>NUCLEOTIDE SEQUENCE [LARGE SCALE GENOMIC DNA]</scope>
    <source>
        <strain>8401</strain>
    </source>
</reference>
<protein>
    <recommendedName>
        <fullName evidence="2">Adenylate kinase</fullName>
        <shortName evidence="2">AK</shortName>
        <ecNumber evidence="2">2.7.4.3</ecNumber>
    </recommendedName>
    <alternativeName>
        <fullName evidence="2">ATP-AMP transphosphorylase</fullName>
    </alternativeName>
    <alternativeName>
        <fullName evidence="2">ATP:AMP phosphotransferase</fullName>
    </alternativeName>
    <alternativeName>
        <fullName evidence="2">Adenylate monophosphate kinase</fullName>
    </alternativeName>
</protein>
<evidence type="ECO:0000250" key="1"/>
<evidence type="ECO:0000255" key="2">
    <source>
        <dbReference type="HAMAP-Rule" id="MF_00235"/>
    </source>
</evidence>